<proteinExistence type="inferred from homology"/>
<dbReference type="EC" id="2.5.1.75" evidence="1"/>
<dbReference type="EMBL" id="AM406670">
    <property type="protein sequence ID" value="CAL95748.1"/>
    <property type="molecule type" value="Genomic_DNA"/>
</dbReference>
<dbReference type="RefSeq" id="WP_011766856.1">
    <property type="nucleotide sequence ID" value="NC_008702.1"/>
</dbReference>
<dbReference type="SMR" id="A1KA92"/>
<dbReference type="STRING" id="62928.azo3131"/>
<dbReference type="KEGG" id="azo:azo3131"/>
<dbReference type="eggNOG" id="COG0324">
    <property type="taxonomic scope" value="Bacteria"/>
</dbReference>
<dbReference type="HOGENOM" id="CLU_032616_0_0_4"/>
<dbReference type="Proteomes" id="UP000002588">
    <property type="component" value="Chromosome"/>
</dbReference>
<dbReference type="GO" id="GO:0005524">
    <property type="term" value="F:ATP binding"/>
    <property type="evidence" value="ECO:0007669"/>
    <property type="project" value="UniProtKB-UniRule"/>
</dbReference>
<dbReference type="GO" id="GO:0052381">
    <property type="term" value="F:tRNA dimethylallyltransferase activity"/>
    <property type="evidence" value="ECO:0007669"/>
    <property type="project" value="UniProtKB-UniRule"/>
</dbReference>
<dbReference type="GO" id="GO:0006400">
    <property type="term" value="P:tRNA modification"/>
    <property type="evidence" value="ECO:0007669"/>
    <property type="project" value="TreeGrafter"/>
</dbReference>
<dbReference type="FunFam" id="1.10.20.140:FF:000001">
    <property type="entry name" value="tRNA dimethylallyltransferase"/>
    <property type="match status" value="1"/>
</dbReference>
<dbReference type="Gene3D" id="1.10.20.140">
    <property type="match status" value="1"/>
</dbReference>
<dbReference type="Gene3D" id="3.40.50.300">
    <property type="entry name" value="P-loop containing nucleotide triphosphate hydrolases"/>
    <property type="match status" value="1"/>
</dbReference>
<dbReference type="HAMAP" id="MF_00185">
    <property type="entry name" value="IPP_trans"/>
    <property type="match status" value="1"/>
</dbReference>
<dbReference type="InterPro" id="IPR039657">
    <property type="entry name" value="Dimethylallyltransferase"/>
</dbReference>
<dbReference type="InterPro" id="IPR018022">
    <property type="entry name" value="IPT"/>
</dbReference>
<dbReference type="InterPro" id="IPR027417">
    <property type="entry name" value="P-loop_NTPase"/>
</dbReference>
<dbReference type="NCBIfam" id="TIGR00174">
    <property type="entry name" value="miaA"/>
    <property type="match status" value="1"/>
</dbReference>
<dbReference type="PANTHER" id="PTHR11088">
    <property type="entry name" value="TRNA DIMETHYLALLYLTRANSFERASE"/>
    <property type="match status" value="1"/>
</dbReference>
<dbReference type="PANTHER" id="PTHR11088:SF60">
    <property type="entry name" value="TRNA DIMETHYLALLYLTRANSFERASE"/>
    <property type="match status" value="1"/>
</dbReference>
<dbReference type="Pfam" id="PF01715">
    <property type="entry name" value="IPPT"/>
    <property type="match status" value="1"/>
</dbReference>
<dbReference type="SUPFAM" id="SSF52540">
    <property type="entry name" value="P-loop containing nucleoside triphosphate hydrolases"/>
    <property type="match status" value="2"/>
</dbReference>
<comment type="function">
    <text evidence="1">Catalyzes the transfer of a dimethylallyl group onto the adenine at position 37 in tRNAs that read codons beginning with uridine, leading to the formation of N6-(dimethylallyl)adenosine (i(6)A).</text>
</comment>
<comment type="catalytic activity">
    <reaction evidence="1">
        <text>adenosine(37) in tRNA + dimethylallyl diphosphate = N(6)-dimethylallyladenosine(37) in tRNA + diphosphate</text>
        <dbReference type="Rhea" id="RHEA:26482"/>
        <dbReference type="Rhea" id="RHEA-COMP:10162"/>
        <dbReference type="Rhea" id="RHEA-COMP:10375"/>
        <dbReference type="ChEBI" id="CHEBI:33019"/>
        <dbReference type="ChEBI" id="CHEBI:57623"/>
        <dbReference type="ChEBI" id="CHEBI:74411"/>
        <dbReference type="ChEBI" id="CHEBI:74415"/>
        <dbReference type="EC" id="2.5.1.75"/>
    </reaction>
</comment>
<comment type="cofactor">
    <cofactor evidence="1">
        <name>Mg(2+)</name>
        <dbReference type="ChEBI" id="CHEBI:18420"/>
    </cofactor>
</comment>
<comment type="subunit">
    <text evidence="1">Monomer.</text>
</comment>
<comment type="similarity">
    <text evidence="1">Belongs to the IPP transferase family.</text>
</comment>
<feature type="chain" id="PRO_1000020562" description="tRNA dimethylallyltransferase">
    <location>
        <begin position="1"/>
        <end position="320"/>
    </location>
</feature>
<feature type="region of interest" description="Interaction with substrate tRNA" evidence="1">
    <location>
        <begin position="41"/>
        <end position="44"/>
    </location>
</feature>
<feature type="region of interest" description="Interaction with substrate tRNA" evidence="1">
    <location>
        <begin position="165"/>
        <end position="169"/>
    </location>
</feature>
<feature type="region of interest" description="Interaction with substrate tRNA" evidence="1">
    <location>
        <begin position="247"/>
        <end position="252"/>
    </location>
</feature>
<feature type="binding site" evidence="1">
    <location>
        <begin position="16"/>
        <end position="23"/>
    </location>
    <ligand>
        <name>ATP</name>
        <dbReference type="ChEBI" id="CHEBI:30616"/>
    </ligand>
</feature>
<feature type="binding site" evidence="1">
    <location>
        <begin position="18"/>
        <end position="23"/>
    </location>
    <ligand>
        <name>substrate</name>
    </ligand>
</feature>
<feature type="site" description="Interaction with substrate tRNA" evidence="1">
    <location>
        <position position="107"/>
    </location>
</feature>
<feature type="site" description="Interaction with substrate tRNA" evidence="1">
    <location>
        <position position="129"/>
    </location>
</feature>
<sequence>MSSPESALPPALLLLGPTASGKTASALALAATLPVEIISVDSALVYRDMDIGTAKPSAAEQAVCPHHLIDVVSPEEAYSAARFCAEASVLMRDISARGRIPLLAGGTMLYFKALRDGLSDLPPADPVLRRAIEERAAAAGWPALHAELARLDPDAAARLEPTDAQRIQRALEIVTLSGAPLAASYARREDAPLPCRLLPIALAPSDRAVLHARIEQRFDQMLAAGLVDEVAALRERYVLQPQMASMRCVGYRQAWEFLDGEIDRATLRFKGIAATRQLAKRQLTWQRQFRDQWPELVELDCLAPDLPQHVRDTALRLLGA</sequence>
<evidence type="ECO:0000255" key="1">
    <source>
        <dbReference type="HAMAP-Rule" id="MF_00185"/>
    </source>
</evidence>
<protein>
    <recommendedName>
        <fullName evidence="1">tRNA dimethylallyltransferase</fullName>
        <ecNumber evidence="1">2.5.1.75</ecNumber>
    </recommendedName>
    <alternativeName>
        <fullName evidence="1">Dimethylallyl diphosphate:tRNA dimethylallyltransferase</fullName>
        <shortName evidence="1">DMAPP:tRNA dimethylallyltransferase</shortName>
        <shortName evidence="1">DMATase</shortName>
    </alternativeName>
    <alternativeName>
        <fullName evidence="1">Isopentenyl-diphosphate:tRNA isopentenyltransferase</fullName>
        <shortName evidence="1">IPP transferase</shortName>
        <shortName evidence="1">IPPT</shortName>
        <shortName evidence="1">IPTase</shortName>
    </alternativeName>
</protein>
<organism>
    <name type="scientific">Azoarcus sp. (strain BH72)</name>
    <dbReference type="NCBI Taxonomy" id="418699"/>
    <lineage>
        <taxon>Bacteria</taxon>
        <taxon>Pseudomonadati</taxon>
        <taxon>Pseudomonadota</taxon>
        <taxon>Betaproteobacteria</taxon>
        <taxon>Rhodocyclales</taxon>
        <taxon>Zoogloeaceae</taxon>
        <taxon>Azoarcus</taxon>
    </lineage>
</organism>
<name>MIAA_AZOSB</name>
<reference key="1">
    <citation type="journal article" date="2006" name="Nat. Biotechnol.">
        <title>Complete genome of the mutualistic, N2-fixing grass endophyte Azoarcus sp. strain BH72.</title>
        <authorList>
            <person name="Krause A."/>
            <person name="Ramakumar A."/>
            <person name="Bartels D."/>
            <person name="Battistoni F."/>
            <person name="Bekel T."/>
            <person name="Boch J."/>
            <person name="Boehm M."/>
            <person name="Friedrich F."/>
            <person name="Hurek T."/>
            <person name="Krause L."/>
            <person name="Linke B."/>
            <person name="McHardy A.C."/>
            <person name="Sarkar A."/>
            <person name="Schneiker S."/>
            <person name="Syed A.A."/>
            <person name="Thauer R."/>
            <person name="Vorhoelter F.-J."/>
            <person name="Weidner S."/>
            <person name="Puehler A."/>
            <person name="Reinhold-Hurek B."/>
            <person name="Kaiser O."/>
            <person name="Goesmann A."/>
        </authorList>
    </citation>
    <scope>NUCLEOTIDE SEQUENCE [LARGE SCALE GENOMIC DNA]</scope>
    <source>
        <strain>BH72</strain>
    </source>
</reference>
<gene>
    <name evidence="1" type="primary">miaA</name>
    <name type="ordered locus">azo3131</name>
</gene>
<accession>A1KA92</accession>
<keyword id="KW-0067">ATP-binding</keyword>
<keyword id="KW-0460">Magnesium</keyword>
<keyword id="KW-0547">Nucleotide-binding</keyword>
<keyword id="KW-1185">Reference proteome</keyword>
<keyword id="KW-0808">Transferase</keyword>
<keyword id="KW-0819">tRNA processing</keyword>